<feature type="chain" id="PRO_0000066745" description="Alpha-like toxin Bom4" evidence="2">
    <location>
        <begin position="1"/>
        <end position="65"/>
    </location>
</feature>
<feature type="domain" description="LCN-type CS-alpha/beta" evidence="1">
    <location>
        <begin position="2"/>
        <end position="64"/>
    </location>
</feature>
<feature type="disulfide bond" evidence="1">
    <location>
        <begin position="12"/>
        <end position="63"/>
    </location>
</feature>
<feature type="disulfide bond" evidence="1">
    <location>
        <begin position="16"/>
        <end position="36"/>
    </location>
</feature>
<feature type="disulfide bond" evidence="1">
    <location>
        <begin position="22"/>
        <end position="46"/>
    </location>
</feature>
<feature type="disulfide bond" evidence="1">
    <location>
        <begin position="26"/>
        <end position="48"/>
    </location>
</feature>
<protein>
    <recommendedName>
        <fullName evidence="4">Alpha-like toxin Bom4</fullName>
    </recommendedName>
    <alternativeName>
        <fullName evidence="3">Bom IV</fullName>
        <shortName evidence="4">BomIV</shortName>
    </alternativeName>
</protein>
<reference key="1">
    <citation type="journal article" date="1999" name="Eur. J. Neurosci.">
        <title>Scorpion alpha-like toxins, toxic to both mammals and insects, differentially interact with receptor site 3 on voltage-gated sodium channels in mammals and insects.</title>
        <authorList>
            <person name="Cestele S."/>
            <person name="Stankiewicz M."/>
            <person name="Mansuelle P."/>
            <person name="De Waard M."/>
            <person name="Dargent B."/>
            <person name="Gilles N."/>
            <person name="Pelhate M."/>
            <person name="Rochat H."/>
            <person name="Martin-Eauclaire M.-F."/>
            <person name="Gordon D."/>
        </authorList>
    </citation>
    <scope>PROTEIN SEQUENCE</scope>
    <scope>FUNCTION</scope>
    <scope>SUBCELLULAR LOCATION</scope>
    <scope>MASS SPECTROMETRY</scope>
    <scope>TOXIC DOSE</scope>
    <source>
        <tissue>Venom</tissue>
    </source>
</reference>
<organism>
    <name type="scientific">Buthus occitanus mardochei</name>
    <name type="common">Moroccan scorpion</name>
    <name type="synonym">Buthus mardochei</name>
    <dbReference type="NCBI Taxonomy" id="6869"/>
    <lineage>
        <taxon>Eukaryota</taxon>
        <taxon>Metazoa</taxon>
        <taxon>Ecdysozoa</taxon>
        <taxon>Arthropoda</taxon>
        <taxon>Chelicerata</taxon>
        <taxon>Arachnida</taxon>
        <taxon>Scorpiones</taxon>
        <taxon>Buthida</taxon>
        <taxon>Buthoidea</taxon>
        <taxon>Buthidae</taxon>
        <taxon>Buthus</taxon>
    </lineage>
</organism>
<sequence>GRDAYIAQPENCVYECAKNSYCNDLCTKNGAKSGYCQWLGKYGNACWCEDLPDNVPIRIPGKCHF</sequence>
<comment type="function">
    <text evidence="2">Alpha toxins bind voltage-independently at site-3 of sodium channels (Nav) and inhibit the inactivation of the activated channels, thereby blocking neuronal transmission. This alpha-like toxin is highly toxic to mice and insects.</text>
</comment>
<comment type="subcellular location">
    <subcellularLocation>
        <location evidence="2">Secreted</location>
    </subcellularLocation>
</comment>
<comment type="tissue specificity">
    <text evidence="4">Expressed by the venom gland.</text>
</comment>
<comment type="domain">
    <text evidence="4">Has the structural arrangement of an alpha-helix connected to antiparallel beta-sheets by disulfide bonds (CS-alpha/beta).</text>
</comment>
<comment type="mass spectrometry"/>
<comment type="toxic dose">
    <text evidence="3">LD(50) is 1.15 ug/kg (23 ng/mouse) by intracerebroventricular injection into mice.</text>
</comment>
<comment type="toxic dose">
    <text evidence="3">LD(50) is 19.7 nmol/g to cockroaches (Blattella germanica).</text>
</comment>
<comment type="similarity">
    <text evidence="4">Belongs to the long (4 C-C) scorpion toxin superfamily. Sodium channel inhibitor family. Alpha subfamily.</text>
</comment>
<keyword id="KW-0903">Direct protein sequencing</keyword>
<keyword id="KW-1015">Disulfide bond</keyword>
<keyword id="KW-0872">Ion channel impairing toxin</keyword>
<keyword id="KW-0528">Neurotoxin</keyword>
<keyword id="KW-0964">Secreted</keyword>
<keyword id="KW-0800">Toxin</keyword>
<keyword id="KW-0738">Voltage-gated sodium channel impairing toxin</keyword>
<evidence type="ECO:0000255" key="1">
    <source>
        <dbReference type="PROSITE-ProRule" id="PRU01210"/>
    </source>
</evidence>
<evidence type="ECO:0000269" key="2">
    <source>
    </source>
</evidence>
<evidence type="ECO:0000303" key="3">
    <source>
    </source>
</evidence>
<evidence type="ECO:0000305" key="4"/>
<dbReference type="SMR" id="P59354"/>
<dbReference type="GO" id="GO:0005576">
    <property type="term" value="C:extracellular region"/>
    <property type="evidence" value="ECO:0007669"/>
    <property type="project" value="UniProtKB-SubCell"/>
</dbReference>
<dbReference type="GO" id="GO:0019871">
    <property type="term" value="F:sodium channel inhibitor activity"/>
    <property type="evidence" value="ECO:0007669"/>
    <property type="project" value="InterPro"/>
</dbReference>
<dbReference type="GO" id="GO:0090729">
    <property type="term" value="F:toxin activity"/>
    <property type="evidence" value="ECO:0007669"/>
    <property type="project" value="UniProtKB-KW"/>
</dbReference>
<dbReference type="GO" id="GO:0006952">
    <property type="term" value="P:defense response"/>
    <property type="evidence" value="ECO:0007669"/>
    <property type="project" value="InterPro"/>
</dbReference>
<dbReference type="CDD" id="cd23106">
    <property type="entry name" value="neurotoxins_LC_scorpion"/>
    <property type="match status" value="1"/>
</dbReference>
<dbReference type="FunFam" id="3.30.30.10:FF:000002">
    <property type="entry name" value="Alpha-like toxin BmK-M1"/>
    <property type="match status" value="1"/>
</dbReference>
<dbReference type="Gene3D" id="3.30.30.10">
    <property type="entry name" value="Knottin, scorpion toxin-like"/>
    <property type="match status" value="1"/>
</dbReference>
<dbReference type="InterPro" id="IPR044062">
    <property type="entry name" value="LCN-type_CS_alpha_beta_dom"/>
</dbReference>
<dbReference type="InterPro" id="IPR003614">
    <property type="entry name" value="Scorpion_toxin-like"/>
</dbReference>
<dbReference type="InterPro" id="IPR036574">
    <property type="entry name" value="Scorpion_toxin-like_sf"/>
</dbReference>
<dbReference type="InterPro" id="IPR018218">
    <property type="entry name" value="Scorpion_toxinL"/>
</dbReference>
<dbReference type="InterPro" id="IPR002061">
    <property type="entry name" value="Scorpion_toxinL/defensin"/>
</dbReference>
<dbReference type="Pfam" id="PF00537">
    <property type="entry name" value="Toxin_3"/>
    <property type="match status" value="1"/>
</dbReference>
<dbReference type="PRINTS" id="PR00285">
    <property type="entry name" value="SCORPNTOXIN"/>
</dbReference>
<dbReference type="PRINTS" id="PR00284">
    <property type="entry name" value="TOXIN"/>
</dbReference>
<dbReference type="SMART" id="SM00505">
    <property type="entry name" value="Knot1"/>
    <property type="match status" value="1"/>
</dbReference>
<dbReference type="SUPFAM" id="SSF57095">
    <property type="entry name" value="Scorpion toxin-like"/>
    <property type="match status" value="1"/>
</dbReference>
<dbReference type="PROSITE" id="PS51863">
    <property type="entry name" value="LCN_CSAB"/>
    <property type="match status" value="1"/>
</dbReference>
<proteinExistence type="evidence at protein level"/>
<accession>P59354</accession>
<name>SCX4_BUTOM</name>